<name>CLPX_SHOC1</name>
<gene>
    <name evidence="1" type="primary">clpX</name>
    <name type="ordered locus">ABC2636</name>
</gene>
<protein>
    <recommendedName>
        <fullName evidence="1">ATP-dependent Clp protease ATP-binding subunit ClpX</fullName>
    </recommendedName>
</protein>
<feature type="chain" id="PRO_0000160312" description="ATP-dependent Clp protease ATP-binding subunit ClpX">
    <location>
        <begin position="1"/>
        <end position="423"/>
    </location>
</feature>
<feature type="domain" description="ClpX-type ZB" evidence="2">
    <location>
        <begin position="1"/>
        <end position="54"/>
    </location>
</feature>
<feature type="binding site" evidence="2">
    <location>
        <position position="13"/>
    </location>
    <ligand>
        <name>Zn(2+)</name>
        <dbReference type="ChEBI" id="CHEBI:29105"/>
    </ligand>
</feature>
<feature type="binding site" evidence="2">
    <location>
        <position position="16"/>
    </location>
    <ligand>
        <name>Zn(2+)</name>
        <dbReference type="ChEBI" id="CHEBI:29105"/>
    </ligand>
</feature>
<feature type="binding site" evidence="2">
    <location>
        <position position="35"/>
    </location>
    <ligand>
        <name>Zn(2+)</name>
        <dbReference type="ChEBI" id="CHEBI:29105"/>
    </ligand>
</feature>
<feature type="binding site" evidence="2">
    <location>
        <position position="38"/>
    </location>
    <ligand>
        <name>Zn(2+)</name>
        <dbReference type="ChEBI" id="CHEBI:29105"/>
    </ligand>
</feature>
<feature type="binding site" evidence="1">
    <location>
        <begin position="117"/>
        <end position="124"/>
    </location>
    <ligand>
        <name>ATP</name>
        <dbReference type="ChEBI" id="CHEBI:30616"/>
    </ligand>
</feature>
<sequence>MFKFNEEKGQLKCSFCGKTQDQVRKLVAGPGVYICDECIELCTEIVEEELGTDEEVEIEEIPKPNEICSILDDYVIGQREAKKSLSVAVYNHYKRINSMSRSEDVELSKSNITLIGPTGSGKTLLAQTLARILNVPFAIADATSLTEAGYVGEDVENILLKLIQAADYDVEKAEKGIIYIDEIDKVARKSENPSITRDVSGEGVQQALLKILEGTTASVPPQGGRKHPHQEFIQIDTTNVLFICGGAFDGIEQIIKRRLGKKVIGFGTDDAKQDDLKPGEYLSKVLPEDLLRFGLIPEFIGRLPIISSLSPLDTDALVEILTKPKNALVKQYQKLLELDDVELEFTEDALREIANKAIERKTGARGLRSIIEGIMLDVMFDLPSREDAVKCIIHGACVTDDAPPILKSADGTELTLDKPKESA</sequence>
<accession>Q5WEN9</accession>
<comment type="function">
    <text evidence="1">ATP-dependent specificity component of the Clp protease. It directs the protease to specific substrates. Can perform chaperone functions in the absence of ClpP.</text>
</comment>
<comment type="subunit">
    <text evidence="1">Component of the ClpX-ClpP complex. Forms a hexameric ring that, in the presence of ATP, binds to fourteen ClpP subunits assembled into a disk-like structure with a central cavity, resembling the structure of eukaryotic proteasomes.</text>
</comment>
<comment type="similarity">
    <text evidence="1">Belongs to the ClpX chaperone family.</text>
</comment>
<organism>
    <name type="scientific">Shouchella clausii (strain KSM-K16)</name>
    <name type="common">Alkalihalobacillus clausii</name>
    <dbReference type="NCBI Taxonomy" id="66692"/>
    <lineage>
        <taxon>Bacteria</taxon>
        <taxon>Bacillati</taxon>
        <taxon>Bacillota</taxon>
        <taxon>Bacilli</taxon>
        <taxon>Bacillales</taxon>
        <taxon>Bacillaceae</taxon>
        <taxon>Shouchella</taxon>
    </lineage>
</organism>
<proteinExistence type="inferred from homology"/>
<keyword id="KW-0067">ATP-binding</keyword>
<keyword id="KW-0143">Chaperone</keyword>
<keyword id="KW-0479">Metal-binding</keyword>
<keyword id="KW-0547">Nucleotide-binding</keyword>
<keyword id="KW-1185">Reference proteome</keyword>
<keyword id="KW-0862">Zinc</keyword>
<reference key="1">
    <citation type="submission" date="2003-10" db="EMBL/GenBank/DDBJ databases">
        <title>The complete genome sequence of the alkaliphilic Bacillus clausii KSM-K16.</title>
        <authorList>
            <person name="Takaki Y."/>
            <person name="Kageyama Y."/>
            <person name="Shimamura S."/>
            <person name="Suzuki H."/>
            <person name="Nishi S."/>
            <person name="Hatada Y."/>
            <person name="Kawai S."/>
            <person name="Ito S."/>
            <person name="Horikoshi K."/>
        </authorList>
    </citation>
    <scope>NUCLEOTIDE SEQUENCE [LARGE SCALE GENOMIC DNA]</scope>
    <source>
        <strain>KSM-K16</strain>
    </source>
</reference>
<evidence type="ECO:0000255" key="1">
    <source>
        <dbReference type="HAMAP-Rule" id="MF_00175"/>
    </source>
</evidence>
<evidence type="ECO:0000255" key="2">
    <source>
        <dbReference type="PROSITE-ProRule" id="PRU01250"/>
    </source>
</evidence>
<dbReference type="EMBL" id="AP006627">
    <property type="protein sequence ID" value="BAD65171.1"/>
    <property type="molecule type" value="Genomic_DNA"/>
</dbReference>
<dbReference type="RefSeq" id="WP_011247479.1">
    <property type="nucleotide sequence ID" value="NC_006582.1"/>
</dbReference>
<dbReference type="SMR" id="Q5WEN9"/>
<dbReference type="STRING" id="66692.ABC2636"/>
<dbReference type="GeneID" id="86926871"/>
<dbReference type="KEGG" id="bcl:ABC2636"/>
<dbReference type="eggNOG" id="COG1219">
    <property type="taxonomic scope" value="Bacteria"/>
</dbReference>
<dbReference type="HOGENOM" id="CLU_014218_8_2_9"/>
<dbReference type="OrthoDB" id="9804062at2"/>
<dbReference type="Proteomes" id="UP000001168">
    <property type="component" value="Chromosome"/>
</dbReference>
<dbReference type="GO" id="GO:0009376">
    <property type="term" value="C:HslUV protease complex"/>
    <property type="evidence" value="ECO:0007669"/>
    <property type="project" value="TreeGrafter"/>
</dbReference>
<dbReference type="GO" id="GO:0005524">
    <property type="term" value="F:ATP binding"/>
    <property type="evidence" value="ECO:0007669"/>
    <property type="project" value="UniProtKB-UniRule"/>
</dbReference>
<dbReference type="GO" id="GO:0016887">
    <property type="term" value="F:ATP hydrolysis activity"/>
    <property type="evidence" value="ECO:0007669"/>
    <property type="project" value="InterPro"/>
</dbReference>
<dbReference type="GO" id="GO:0140662">
    <property type="term" value="F:ATP-dependent protein folding chaperone"/>
    <property type="evidence" value="ECO:0007669"/>
    <property type="project" value="InterPro"/>
</dbReference>
<dbReference type="GO" id="GO:0046983">
    <property type="term" value="F:protein dimerization activity"/>
    <property type="evidence" value="ECO:0007669"/>
    <property type="project" value="InterPro"/>
</dbReference>
<dbReference type="GO" id="GO:0051082">
    <property type="term" value="F:unfolded protein binding"/>
    <property type="evidence" value="ECO:0007669"/>
    <property type="project" value="UniProtKB-UniRule"/>
</dbReference>
<dbReference type="GO" id="GO:0008270">
    <property type="term" value="F:zinc ion binding"/>
    <property type="evidence" value="ECO:0007669"/>
    <property type="project" value="InterPro"/>
</dbReference>
<dbReference type="GO" id="GO:0051301">
    <property type="term" value="P:cell division"/>
    <property type="evidence" value="ECO:0007669"/>
    <property type="project" value="TreeGrafter"/>
</dbReference>
<dbReference type="GO" id="GO:0051603">
    <property type="term" value="P:proteolysis involved in protein catabolic process"/>
    <property type="evidence" value="ECO:0007669"/>
    <property type="project" value="TreeGrafter"/>
</dbReference>
<dbReference type="CDD" id="cd19497">
    <property type="entry name" value="RecA-like_ClpX"/>
    <property type="match status" value="1"/>
</dbReference>
<dbReference type="FunFam" id="1.10.8.60:FF:000002">
    <property type="entry name" value="ATP-dependent Clp protease ATP-binding subunit ClpX"/>
    <property type="match status" value="1"/>
</dbReference>
<dbReference type="FunFam" id="3.40.50.300:FF:000005">
    <property type="entry name" value="ATP-dependent Clp protease ATP-binding subunit ClpX"/>
    <property type="match status" value="1"/>
</dbReference>
<dbReference type="Gene3D" id="1.10.8.60">
    <property type="match status" value="1"/>
</dbReference>
<dbReference type="Gene3D" id="6.20.220.10">
    <property type="entry name" value="ClpX chaperone, C4-type zinc finger domain"/>
    <property type="match status" value="1"/>
</dbReference>
<dbReference type="Gene3D" id="3.40.50.300">
    <property type="entry name" value="P-loop containing nucleotide triphosphate hydrolases"/>
    <property type="match status" value="1"/>
</dbReference>
<dbReference type="HAMAP" id="MF_00175">
    <property type="entry name" value="ClpX"/>
    <property type="match status" value="1"/>
</dbReference>
<dbReference type="InterPro" id="IPR003593">
    <property type="entry name" value="AAA+_ATPase"/>
</dbReference>
<dbReference type="InterPro" id="IPR050052">
    <property type="entry name" value="ATP-dep_Clp_protease_ClpX"/>
</dbReference>
<dbReference type="InterPro" id="IPR003959">
    <property type="entry name" value="ATPase_AAA_core"/>
</dbReference>
<dbReference type="InterPro" id="IPR019489">
    <property type="entry name" value="Clp_ATPase_C"/>
</dbReference>
<dbReference type="InterPro" id="IPR004487">
    <property type="entry name" value="Clp_protease_ATP-bd_su_ClpX"/>
</dbReference>
<dbReference type="InterPro" id="IPR046425">
    <property type="entry name" value="ClpX_bact"/>
</dbReference>
<dbReference type="InterPro" id="IPR027417">
    <property type="entry name" value="P-loop_NTPase"/>
</dbReference>
<dbReference type="InterPro" id="IPR010603">
    <property type="entry name" value="Znf_CppX_C4"/>
</dbReference>
<dbReference type="InterPro" id="IPR038366">
    <property type="entry name" value="Znf_CppX_C4_sf"/>
</dbReference>
<dbReference type="NCBIfam" id="TIGR00382">
    <property type="entry name" value="clpX"/>
    <property type="match status" value="1"/>
</dbReference>
<dbReference type="NCBIfam" id="NF003745">
    <property type="entry name" value="PRK05342.1"/>
    <property type="match status" value="1"/>
</dbReference>
<dbReference type="PANTHER" id="PTHR48102:SF7">
    <property type="entry name" value="ATP-DEPENDENT CLP PROTEASE ATP-BINDING SUBUNIT CLPX-LIKE, MITOCHONDRIAL"/>
    <property type="match status" value="1"/>
</dbReference>
<dbReference type="PANTHER" id="PTHR48102">
    <property type="entry name" value="ATP-DEPENDENT CLP PROTEASE ATP-BINDING SUBUNIT CLPX-LIKE, MITOCHONDRIAL-RELATED"/>
    <property type="match status" value="1"/>
</dbReference>
<dbReference type="Pfam" id="PF07724">
    <property type="entry name" value="AAA_2"/>
    <property type="match status" value="1"/>
</dbReference>
<dbReference type="Pfam" id="PF10431">
    <property type="entry name" value="ClpB_D2-small"/>
    <property type="match status" value="1"/>
</dbReference>
<dbReference type="Pfam" id="PF06689">
    <property type="entry name" value="zf-C4_ClpX"/>
    <property type="match status" value="1"/>
</dbReference>
<dbReference type="SMART" id="SM00382">
    <property type="entry name" value="AAA"/>
    <property type="match status" value="1"/>
</dbReference>
<dbReference type="SMART" id="SM01086">
    <property type="entry name" value="ClpB_D2-small"/>
    <property type="match status" value="1"/>
</dbReference>
<dbReference type="SMART" id="SM00994">
    <property type="entry name" value="zf-C4_ClpX"/>
    <property type="match status" value="1"/>
</dbReference>
<dbReference type="SUPFAM" id="SSF57716">
    <property type="entry name" value="Glucocorticoid receptor-like (DNA-binding domain)"/>
    <property type="match status" value="1"/>
</dbReference>
<dbReference type="SUPFAM" id="SSF52540">
    <property type="entry name" value="P-loop containing nucleoside triphosphate hydrolases"/>
    <property type="match status" value="1"/>
</dbReference>
<dbReference type="PROSITE" id="PS51902">
    <property type="entry name" value="CLPX_ZB"/>
    <property type="match status" value="1"/>
</dbReference>